<feature type="chain" id="PRO_0000318362" description="Protein translocase subunit SecA">
    <location>
        <begin position="1"/>
        <end position="933"/>
    </location>
</feature>
<feature type="region of interest" description="Disordered" evidence="2">
    <location>
        <begin position="567"/>
        <end position="588"/>
    </location>
</feature>
<feature type="region of interest" description="Disordered" evidence="2">
    <location>
        <begin position="840"/>
        <end position="861"/>
    </location>
</feature>
<feature type="region of interest" description="Disordered" evidence="2">
    <location>
        <begin position="880"/>
        <end position="933"/>
    </location>
</feature>
<feature type="compositionally biased region" description="Basic and acidic residues" evidence="2">
    <location>
        <begin position="845"/>
        <end position="856"/>
    </location>
</feature>
<feature type="compositionally biased region" description="Low complexity" evidence="2">
    <location>
        <begin position="880"/>
        <end position="897"/>
    </location>
</feature>
<feature type="compositionally biased region" description="Basic and acidic residues" evidence="2">
    <location>
        <begin position="905"/>
        <end position="914"/>
    </location>
</feature>
<feature type="compositionally biased region" description="Basic residues" evidence="2">
    <location>
        <begin position="924"/>
        <end position="933"/>
    </location>
</feature>
<feature type="binding site" evidence="1">
    <location>
        <position position="87"/>
    </location>
    <ligand>
        <name>ATP</name>
        <dbReference type="ChEBI" id="CHEBI:30616"/>
    </ligand>
</feature>
<feature type="binding site" evidence="1">
    <location>
        <begin position="105"/>
        <end position="109"/>
    </location>
    <ligand>
        <name>ATP</name>
        <dbReference type="ChEBI" id="CHEBI:30616"/>
    </ligand>
</feature>
<feature type="binding site" evidence="1">
    <location>
        <position position="515"/>
    </location>
    <ligand>
        <name>ATP</name>
        <dbReference type="ChEBI" id="CHEBI:30616"/>
    </ligand>
</feature>
<feature type="binding site" evidence="1">
    <location>
        <position position="918"/>
    </location>
    <ligand>
        <name>Zn(2+)</name>
        <dbReference type="ChEBI" id="CHEBI:29105"/>
    </ligand>
</feature>
<feature type="binding site" evidence="1">
    <location>
        <position position="920"/>
    </location>
    <ligand>
        <name>Zn(2+)</name>
        <dbReference type="ChEBI" id="CHEBI:29105"/>
    </ligand>
</feature>
<feature type="binding site" evidence="1">
    <location>
        <position position="929"/>
    </location>
    <ligand>
        <name>Zn(2+)</name>
        <dbReference type="ChEBI" id="CHEBI:29105"/>
    </ligand>
</feature>
<feature type="binding site" evidence="1">
    <location>
        <position position="930"/>
    </location>
    <ligand>
        <name>Zn(2+)</name>
        <dbReference type="ChEBI" id="CHEBI:29105"/>
    </ligand>
</feature>
<keyword id="KW-0067">ATP-binding</keyword>
<keyword id="KW-0997">Cell inner membrane</keyword>
<keyword id="KW-1003">Cell membrane</keyword>
<keyword id="KW-0963">Cytoplasm</keyword>
<keyword id="KW-0472">Membrane</keyword>
<keyword id="KW-0479">Metal-binding</keyword>
<keyword id="KW-0547">Nucleotide-binding</keyword>
<keyword id="KW-0653">Protein transport</keyword>
<keyword id="KW-1185">Reference proteome</keyword>
<keyword id="KW-1278">Translocase</keyword>
<keyword id="KW-0811">Translocation</keyword>
<keyword id="KW-0813">Transport</keyword>
<keyword id="KW-0862">Zinc</keyword>
<protein>
    <recommendedName>
        <fullName evidence="1">Protein translocase subunit SecA</fullName>
        <ecNumber evidence="1">7.4.2.8</ecNumber>
    </recommendedName>
</protein>
<gene>
    <name evidence="1" type="primary">secA</name>
    <name type="ordered locus">Hhal_2027</name>
</gene>
<organism>
    <name type="scientific">Halorhodospira halophila (strain DSM 244 / SL1)</name>
    <name type="common">Ectothiorhodospira halophila (strain DSM 244 / SL1)</name>
    <dbReference type="NCBI Taxonomy" id="349124"/>
    <lineage>
        <taxon>Bacteria</taxon>
        <taxon>Pseudomonadati</taxon>
        <taxon>Pseudomonadota</taxon>
        <taxon>Gammaproteobacteria</taxon>
        <taxon>Chromatiales</taxon>
        <taxon>Ectothiorhodospiraceae</taxon>
        <taxon>Halorhodospira</taxon>
    </lineage>
</organism>
<reference key="1">
    <citation type="submission" date="2006-12" db="EMBL/GenBank/DDBJ databases">
        <title>Complete sequence of Halorhodospira halophila SL1.</title>
        <authorList>
            <consortium name="US DOE Joint Genome Institute"/>
            <person name="Copeland A."/>
            <person name="Lucas S."/>
            <person name="Lapidus A."/>
            <person name="Barry K."/>
            <person name="Detter J.C."/>
            <person name="Glavina del Rio T."/>
            <person name="Hammon N."/>
            <person name="Israni S."/>
            <person name="Dalin E."/>
            <person name="Tice H."/>
            <person name="Pitluck S."/>
            <person name="Saunders E."/>
            <person name="Brettin T."/>
            <person name="Bruce D."/>
            <person name="Han C."/>
            <person name="Tapia R."/>
            <person name="Schmutz J."/>
            <person name="Larimer F."/>
            <person name="Land M."/>
            <person name="Hauser L."/>
            <person name="Kyrpides N."/>
            <person name="Mikhailova N."/>
            <person name="Hoff W."/>
            <person name="Richardson P."/>
        </authorList>
    </citation>
    <scope>NUCLEOTIDE SEQUENCE [LARGE SCALE GENOMIC DNA]</scope>
    <source>
        <strain>DSM 244 / SL1</strain>
    </source>
</reference>
<proteinExistence type="inferred from homology"/>
<accession>A1WYM9</accession>
<comment type="function">
    <text evidence="1">Part of the Sec protein translocase complex. Interacts with the SecYEG preprotein conducting channel. Has a central role in coupling the hydrolysis of ATP to the transfer of proteins into and across the cell membrane, serving both as a receptor for the preprotein-SecB complex and as an ATP-driven molecular motor driving the stepwise translocation of polypeptide chains across the membrane.</text>
</comment>
<comment type="catalytic activity">
    <reaction evidence="1">
        <text>ATP + H2O + cellular proteinSide 1 = ADP + phosphate + cellular proteinSide 2.</text>
        <dbReference type="EC" id="7.4.2.8"/>
    </reaction>
</comment>
<comment type="cofactor">
    <cofactor evidence="1">
        <name>Zn(2+)</name>
        <dbReference type="ChEBI" id="CHEBI:29105"/>
    </cofactor>
    <text evidence="1">May bind 1 zinc ion per subunit.</text>
</comment>
<comment type="subunit">
    <text evidence="1">Monomer and homodimer. Part of the essential Sec protein translocation apparatus which comprises SecA, SecYEG and auxiliary proteins SecDF-YajC and YidC.</text>
</comment>
<comment type="subcellular location">
    <subcellularLocation>
        <location evidence="1">Cell inner membrane</location>
        <topology evidence="1">Peripheral membrane protein</topology>
        <orientation evidence="1">Cytoplasmic side</orientation>
    </subcellularLocation>
    <subcellularLocation>
        <location evidence="1">Cytoplasm</location>
    </subcellularLocation>
    <text evidence="1">Distribution is 50-50.</text>
</comment>
<comment type="similarity">
    <text evidence="1">Belongs to the SecA family.</text>
</comment>
<sequence>MFSAIAKRVFGTRNDRALKRLRKRIEAINAHEPELQKLSDEQLQAKTDAFKARLAQGETLDDLLEEAFAVVREASRRVLGLRHFDVQLLGAMVLHDGNISEMKTGEGKTLVATLAVYLNALTGRGVHVVTVNDYLARRDAEWMGRLYRFLGMEVGVVVPRQPREEKVAAYQADITYGTNNEFGFDYLRDNMAFRKEDKVQRDLYYALVDEVDSILIDEARTPLIISGPAEQAGELYEAMSRLVPRLQAQKPEERPEENPELGPGDYYVDEKARQVYLTEGGHDRAEELLREEGLIGENDSLYDARNINVVHHLNAALRAHTLYERDVHYLIRDNQVVIVDEFTGRAMPGRRWSEGLHQAVEAKEGLPIQAENQTLASITFQNYFRLYDKLAGMTGTADTEAFEFQHIYGLEVLSIPTHRPMVRDDAHDLVYRTADEKYEAIIADIRDCVQRDQPVLVGTTSIEASERLSKALKDAGVEHNVLNAKHNESEAQIIADAGRPGTVTIATNMAGRGTDIVLGGNLDQELAELGEDPDPAEVERRKAEWQDRHDRVVNAGGLHVIGTERHESRRIDNQLRGRSGRQGDPGSSRFYLSLEDSLLRIFASERMSGMLEKLGMQHGEAIESGMVSRVIENAQRKVEAHNFDMRKHLLEFDDVANDQRKVVYEQRNELLEADDVAETVDAIRQDVVEKVISEHIPPGSIDEQWDVPGLERTLKEEFGQELPIQRWLDDEDDLHEETLRERIQGEIEKAYRAKEAEAGASVVRHFEKAVMLQVLDKHWKEHLAAMDYLRQGVGLRGYAQRNPKQEFKKDAFAMFQEMLEGLKRDAVGVLLRVQVRAEEDVEAVEEQRRQEAERMQMRHAAPASAAAGAVAAGSGAAGAAAAEGDSAPTGGAQQQSAGGRGQETVAREGPKVGRNESCPCGSGKKYKHCCGKL</sequence>
<evidence type="ECO:0000255" key="1">
    <source>
        <dbReference type="HAMAP-Rule" id="MF_01382"/>
    </source>
</evidence>
<evidence type="ECO:0000256" key="2">
    <source>
        <dbReference type="SAM" id="MobiDB-lite"/>
    </source>
</evidence>
<dbReference type="EC" id="7.4.2.8" evidence="1"/>
<dbReference type="EMBL" id="CP000544">
    <property type="protein sequence ID" value="ABM62791.1"/>
    <property type="molecule type" value="Genomic_DNA"/>
</dbReference>
<dbReference type="RefSeq" id="WP_011814813.1">
    <property type="nucleotide sequence ID" value="NC_008789.1"/>
</dbReference>
<dbReference type="SMR" id="A1WYM9"/>
<dbReference type="STRING" id="349124.Hhal_2027"/>
<dbReference type="KEGG" id="hha:Hhal_2027"/>
<dbReference type="eggNOG" id="COG0653">
    <property type="taxonomic scope" value="Bacteria"/>
</dbReference>
<dbReference type="HOGENOM" id="CLU_005314_3_0_6"/>
<dbReference type="OrthoDB" id="9805579at2"/>
<dbReference type="Proteomes" id="UP000000647">
    <property type="component" value="Chromosome"/>
</dbReference>
<dbReference type="GO" id="GO:0031522">
    <property type="term" value="C:cell envelope Sec protein transport complex"/>
    <property type="evidence" value="ECO:0007669"/>
    <property type="project" value="TreeGrafter"/>
</dbReference>
<dbReference type="GO" id="GO:0005829">
    <property type="term" value="C:cytosol"/>
    <property type="evidence" value="ECO:0007669"/>
    <property type="project" value="TreeGrafter"/>
</dbReference>
<dbReference type="GO" id="GO:0005886">
    <property type="term" value="C:plasma membrane"/>
    <property type="evidence" value="ECO:0007669"/>
    <property type="project" value="UniProtKB-SubCell"/>
</dbReference>
<dbReference type="GO" id="GO:0005524">
    <property type="term" value="F:ATP binding"/>
    <property type="evidence" value="ECO:0007669"/>
    <property type="project" value="UniProtKB-UniRule"/>
</dbReference>
<dbReference type="GO" id="GO:0046872">
    <property type="term" value="F:metal ion binding"/>
    <property type="evidence" value="ECO:0007669"/>
    <property type="project" value="UniProtKB-KW"/>
</dbReference>
<dbReference type="GO" id="GO:0008564">
    <property type="term" value="F:protein-exporting ATPase activity"/>
    <property type="evidence" value="ECO:0007669"/>
    <property type="project" value="UniProtKB-EC"/>
</dbReference>
<dbReference type="GO" id="GO:0065002">
    <property type="term" value="P:intracellular protein transmembrane transport"/>
    <property type="evidence" value="ECO:0007669"/>
    <property type="project" value="UniProtKB-UniRule"/>
</dbReference>
<dbReference type="GO" id="GO:0017038">
    <property type="term" value="P:protein import"/>
    <property type="evidence" value="ECO:0007669"/>
    <property type="project" value="InterPro"/>
</dbReference>
<dbReference type="GO" id="GO:0006605">
    <property type="term" value="P:protein targeting"/>
    <property type="evidence" value="ECO:0007669"/>
    <property type="project" value="UniProtKB-UniRule"/>
</dbReference>
<dbReference type="GO" id="GO:0043952">
    <property type="term" value="P:protein transport by the Sec complex"/>
    <property type="evidence" value="ECO:0007669"/>
    <property type="project" value="TreeGrafter"/>
</dbReference>
<dbReference type="CDD" id="cd17928">
    <property type="entry name" value="DEXDc_SecA"/>
    <property type="match status" value="1"/>
</dbReference>
<dbReference type="CDD" id="cd18803">
    <property type="entry name" value="SF2_C_secA"/>
    <property type="match status" value="1"/>
</dbReference>
<dbReference type="FunFam" id="3.40.50.300:FF:000113">
    <property type="entry name" value="Preprotein translocase subunit SecA"/>
    <property type="match status" value="1"/>
</dbReference>
<dbReference type="FunFam" id="3.90.1440.10:FF:000001">
    <property type="entry name" value="Preprotein translocase subunit SecA"/>
    <property type="match status" value="1"/>
</dbReference>
<dbReference type="FunFam" id="1.10.3060.10:FF:000003">
    <property type="entry name" value="Protein translocase subunit SecA"/>
    <property type="match status" value="1"/>
</dbReference>
<dbReference type="FunFam" id="3.40.50.300:FF:000334">
    <property type="entry name" value="Protein translocase subunit SecA"/>
    <property type="match status" value="1"/>
</dbReference>
<dbReference type="Gene3D" id="1.10.3060.10">
    <property type="entry name" value="Helical scaffold and wing domains of SecA"/>
    <property type="match status" value="1"/>
</dbReference>
<dbReference type="Gene3D" id="3.40.50.300">
    <property type="entry name" value="P-loop containing nucleotide triphosphate hydrolases"/>
    <property type="match status" value="2"/>
</dbReference>
<dbReference type="Gene3D" id="3.90.1440.10">
    <property type="entry name" value="SecA, preprotein cross-linking domain"/>
    <property type="match status" value="1"/>
</dbReference>
<dbReference type="HAMAP" id="MF_01382">
    <property type="entry name" value="SecA"/>
    <property type="match status" value="1"/>
</dbReference>
<dbReference type="InterPro" id="IPR014001">
    <property type="entry name" value="Helicase_ATP-bd"/>
</dbReference>
<dbReference type="InterPro" id="IPR027417">
    <property type="entry name" value="P-loop_NTPase"/>
</dbReference>
<dbReference type="InterPro" id="IPR004027">
    <property type="entry name" value="SEC_C_motif"/>
</dbReference>
<dbReference type="InterPro" id="IPR000185">
    <property type="entry name" value="SecA"/>
</dbReference>
<dbReference type="InterPro" id="IPR020937">
    <property type="entry name" value="SecA_CS"/>
</dbReference>
<dbReference type="InterPro" id="IPR011115">
    <property type="entry name" value="SecA_DEAD"/>
</dbReference>
<dbReference type="InterPro" id="IPR014018">
    <property type="entry name" value="SecA_motor_DEAD"/>
</dbReference>
<dbReference type="InterPro" id="IPR011130">
    <property type="entry name" value="SecA_preprotein_X-link_dom"/>
</dbReference>
<dbReference type="InterPro" id="IPR044722">
    <property type="entry name" value="SecA_SF2_C"/>
</dbReference>
<dbReference type="InterPro" id="IPR011116">
    <property type="entry name" value="SecA_Wing/Scaffold"/>
</dbReference>
<dbReference type="InterPro" id="IPR036266">
    <property type="entry name" value="SecA_Wing/Scaffold_sf"/>
</dbReference>
<dbReference type="InterPro" id="IPR036670">
    <property type="entry name" value="SecA_X-link_sf"/>
</dbReference>
<dbReference type="NCBIfam" id="NF009538">
    <property type="entry name" value="PRK12904.1"/>
    <property type="match status" value="1"/>
</dbReference>
<dbReference type="NCBIfam" id="TIGR00963">
    <property type="entry name" value="secA"/>
    <property type="match status" value="1"/>
</dbReference>
<dbReference type="PANTHER" id="PTHR30612:SF0">
    <property type="entry name" value="CHLOROPLAST PROTEIN-TRANSPORTING ATPASE"/>
    <property type="match status" value="1"/>
</dbReference>
<dbReference type="PANTHER" id="PTHR30612">
    <property type="entry name" value="SECA INNER MEMBRANE COMPONENT OF SEC PROTEIN SECRETION SYSTEM"/>
    <property type="match status" value="1"/>
</dbReference>
<dbReference type="Pfam" id="PF21090">
    <property type="entry name" value="P-loop_SecA"/>
    <property type="match status" value="1"/>
</dbReference>
<dbReference type="Pfam" id="PF02810">
    <property type="entry name" value="SEC-C"/>
    <property type="match status" value="1"/>
</dbReference>
<dbReference type="Pfam" id="PF07517">
    <property type="entry name" value="SecA_DEAD"/>
    <property type="match status" value="1"/>
</dbReference>
<dbReference type="Pfam" id="PF01043">
    <property type="entry name" value="SecA_PP_bind"/>
    <property type="match status" value="1"/>
</dbReference>
<dbReference type="Pfam" id="PF07516">
    <property type="entry name" value="SecA_SW"/>
    <property type="match status" value="1"/>
</dbReference>
<dbReference type="PRINTS" id="PR00906">
    <property type="entry name" value="SECA"/>
</dbReference>
<dbReference type="SMART" id="SM00957">
    <property type="entry name" value="SecA_DEAD"/>
    <property type="match status" value="1"/>
</dbReference>
<dbReference type="SMART" id="SM00958">
    <property type="entry name" value="SecA_PP_bind"/>
    <property type="match status" value="1"/>
</dbReference>
<dbReference type="SUPFAM" id="SSF81886">
    <property type="entry name" value="Helical scaffold and wing domains of SecA"/>
    <property type="match status" value="1"/>
</dbReference>
<dbReference type="SUPFAM" id="SSF52540">
    <property type="entry name" value="P-loop containing nucleoside triphosphate hydrolases"/>
    <property type="match status" value="2"/>
</dbReference>
<dbReference type="SUPFAM" id="SSF81767">
    <property type="entry name" value="Pre-protein crosslinking domain of SecA"/>
    <property type="match status" value="1"/>
</dbReference>
<dbReference type="PROSITE" id="PS01312">
    <property type="entry name" value="SECA"/>
    <property type="match status" value="1"/>
</dbReference>
<dbReference type="PROSITE" id="PS51196">
    <property type="entry name" value="SECA_MOTOR_DEAD"/>
    <property type="match status" value="1"/>
</dbReference>
<name>SECA_HALHL</name>